<protein>
    <recommendedName>
        <fullName evidence="1">Glutamate 5-kinase</fullName>
        <ecNumber evidence="1">2.7.2.11</ecNumber>
    </recommendedName>
    <alternativeName>
        <fullName evidence="1">Gamma-glutamyl kinase</fullName>
        <shortName evidence="1">GK</shortName>
    </alternativeName>
</protein>
<name>PROB_SALEP</name>
<keyword id="KW-0028">Amino-acid biosynthesis</keyword>
<keyword id="KW-0067">ATP-binding</keyword>
<keyword id="KW-0963">Cytoplasm</keyword>
<keyword id="KW-0418">Kinase</keyword>
<keyword id="KW-0547">Nucleotide-binding</keyword>
<keyword id="KW-0641">Proline biosynthesis</keyword>
<keyword id="KW-0808">Transferase</keyword>
<proteinExistence type="inferred from homology"/>
<comment type="function">
    <text evidence="1">Catalyzes the transfer of a phosphate group to glutamate to form L-glutamate 5-phosphate.</text>
</comment>
<comment type="catalytic activity">
    <reaction evidence="1">
        <text>L-glutamate + ATP = L-glutamyl 5-phosphate + ADP</text>
        <dbReference type="Rhea" id="RHEA:14877"/>
        <dbReference type="ChEBI" id="CHEBI:29985"/>
        <dbReference type="ChEBI" id="CHEBI:30616"/>
        <dbReference type="ChEBI" id="CHEBI:58274"/>
        <dbReference type="ChEBI" id="CHEBI:456216"/>
        <dbReference type="EC" id="2.7.2.11"/>
    </reaction>
</comment>
<comment type="pathway">
    <text evidence="1">Amino-acid biosynthesis; L-proline biosynthesis; L-glutamate 5-semialdehyde from L-glutamate: step 1/2.</text>
</comment>
<comment type="subcellular location">
    <subcellularLocation>
        <location evidence="1">Cytoplasm</location>
    </subcellularLocation>
</comment>
<comment type="similarity">
    <text evidence="1">Belongs to the glutamate 5-kinase family.</text>
</comment>
<gene>
    <name evidence="1" type="primary">proB</name>
    <name type="ordered locus">SEN0304</name>
</gene>
<dbReference type="EC" id="2.7.2.11" evidence="1"/>
<dbReference type="EMBL" id="AM933172">
    <property type="protein sequence ID" value="CAR31891.1"/>
    <property type="molecule type" value="Genomic_DNA"/>
</dbReference>
<dbReference type="RefSeq" id="WP_001285275.1">
    <property type="nucleotide sequence ID" value="NC_011294.1"/>
</dbReference>
<dbReference type="SMR" id="B5R4S5"/>
<dbReference type="KEGG" id="set:SEN0304"/>
<dbReference type="HOGENOM" id="CLU_025400_2_0_6"/>
<dbReference type="UniPathway" id="UPA00098">
    <property type="reaction ID" value="UER00359"/>
</dbReference>
<dbReference type="Proteomes" id="UP000000613">
    <property type="component" value="Chromosome"/>
</dbReference>
<dbReference type="GO" id="GO:0005829">
    <property type="term" value="C:cytosol"/>
    <property type="evidence" value="ECO:0007669"/>
    <property type="project" value="TreeGrafter"/>
</dbReference>
<dbReference type="GO" id="GO:0005524">
    <property type="term" value="F:ATP binding"/>
    <property type="evidence" value="ECO:0007669"/>
    <property type="project" value="UniProtKB-KW"/>
</dbReference>
<dbReference type="GO" id="GO:0004349">
    <property type="term" value="F:glutamate 5-kinase activity"/>
    <property type="evidence" value="ECO:0007669"/>
    <property type="project" value="UniProtKB-UniRule"/>
</dbReference>
<dbReference type="GO" id="GO:0003723">
    <property type="term" value="F:RNA binding"/>
    <property type="evidence" value="ECO:0007669"/>
    <property type="project" value="InterPro"/>
</dbReference>
<dbReference type="GO" id="GO:0055129">
    <property type="term" value="P:L-proline biosynthetic process"/>
    <property type="evidence" value="ECO:0007669"/>
    <property type="project" value="UniProtKB-UniRule"/>
</dbReference>
<dbReference type="CDD" id="cd04242">
    <property type="entry name" value="AAK_G5K_ProB"/>
    <property type="match status" value="1"/>
</dbReference>
<dbReference type="CDD" id="cd21157">
    <property type="entry name" value="PUA_G5K"/>
    <property type="match status" value="1"/>
</dbReference>
<dbReference type="FunFam" id="2.30.130.10:FF:000003">
    <property type="entry name" value="Glutamate 5-kinase"/>
    <property type="match status" value="1"/>
</dbReference>
<dbReference type="FunFam" id="3.40.1160.10:FF:000006">
    <property type="entry name" value="Glutamate 5-kinase"/>
    <property type="match status" value="1"/>
</dbReference>
<dbReference type="Gene3D" id="3.40.1160.10">
    <property type="entry name" value="Acetylglutamate kinase-like"/>
    <property type="match status" value="2"/>
</dbReference>
<dbReference type="Gene3D" id="2.30.130.10">
    <property type="entry name" value="PUA domain"/>
    <property type="match status" value="1"/>
</dbReference>
<dbReference type="HAMAP" id="MF_00456">
    <property type="entry name" value="ProB"/>
    <property type="match status" value="1"/>
</dbReference>
<dbReference type="InterPro" id="IPR036393">
    <property type="entry name" value="AceGlu_kinase-like_sf"/>
</dbReference>
<dbReference type="InterPro" id="IPR001048">
    <property type="entry name" value="Asp/Glu/Uridylate_kinase"/>
</dbReference>
<dbReference type="InterPro" id="IPR041739">
    <property type="entry name" value="G5K_ProB"/>
</dbReference>
<dbReference type="InterPro" id="IPR001057">
    <property type="entry name" value="Glu/AcGlu_kinase"/>
</dbReference>
<dbReference type="InterPro" id="IPR011529">
    <property type="entry name" value="Glu_5kinase"/>
</dbReference>
<dbReference type="InterPro" id="IPR005715">
    <property type="entry name" value="Glu_5kinase/COase_Synthase"/>
</dbReference>
<dbReference type="InterPro" id="IPR019797">
    <property type="entry name" value="Glutamate_5-kinase_CS"/>
</dbReference>
<dbReference type="InterPro" id="IPR002478">
    <property type="entry name" value="PUA"/>
</dbReference>
<dbReference type="InterPro" id="IPR015947">
    <property type="entry name" value="PUA-like_sf"/>
</dbReference>
<dbReference type="InterPro" id="IPR036974">
    <property type="entry name" value="PUA_sf"/>
</dbReference>
<dbReference type="NCBIfam" id="TIGR01027">
    <property type="entry name" value="proB"/>
    <property type="match status" value="1"/>
</dbReference>
<dbReference type="PANTHER" id="PTHR43654">
    <property type="entry name" value="GLUTAMATE 5-KINASE"/>
    <property type="match status" value="1"/>
</dbReference>
<dbReference type="PANTHER" id="PTHR43654:SF1">
    <property type="entry name" value="ISOPENTENYL PHOSPHATE KINASE"/>
    <property type="match status" value="1"/>
</dbReference>
<dbReference type="Pfam" id="PF00696">
    <property type="entry name" value="AA_kinase"/>
    <property type="match status" value="1"/>
</dbReference>
<dbReference type="Pfam" id="PF01472">
    <property type="entry name" value="PUA"/>
    <property type="match status" value="1"/>
</dbReference>
<dbReference type="PIRSF" id="PIRSF000729">
    <property type="entry name" value="GK"/>
    <property type="match status" value="1"/>
</dbReference>
<dbReference type="PRINTS" id="PR00474">
    <property type="entry name" value="GLU5KINASE"/>
</dbReference>
<dbReference type="SMART" id="SM00359">
    <property type="entry name" value="PUA"/>
    <property type="match status" value="1"/>
</dbReference>
<dbReference type="SUPFAM" id="SSF53633">
    <property type="entry name" value="Carbamate kinase-like"/>
    <property type="match status" value="1"/>
</dbReference>
<dbReference type="SUPFAM" id="SSF88697">
    <property type="entry name" value="PUA domain-like"/>
    <property type="match status" value="1"/>
</dbReference>
<dbReference type="PROSITE" id="PS00902">
    <property type="entry name" value="GLUTAMATE_5_KINASE"/>
    <property type="match status" value="1"/>
</dbReference>
<dbReference type="PROSITE" id="PS50890">
    <property type="entry name" value="PUA"/>
    <property type="match status" value="1"/>
</dbReference>
<organism>
    <name type="scientific">Salmonella enteritidis PT4 (strain P125109)</name>
    <dbReference type="NCBI Taxonomy" id="550537"/>
    <lineage>
        <taxon>Bacteria</taxon>
        <taxon>Pseudomonadati</taxon>
        <taxon>Pseudomonadota</taxon>
        <taxon>Gammaproteobacteria</taxon>
        <taxon>Enterobacterales</taxon>
        <taxon>Enterobacteriaceae</taxon>
        <taxon>Salmonella</taxon>
    </lineage>
</organism>
<feature type="chain" id="PRO_1000125257" description="Glutamate 5-kinase">
    <location>
        <begin position="1"/>
        <end position="367"/>
    </location>
</feature>
<feature type="domain" description="PUA" evidence="1">
    <location>
        <begin position="275"/>
        <end position="353"/>
    </location>
</feature>
<feature type="binding site" evidence="1">
    <location>
        <position position="10"/>
    </location>
    <ligand>
        <name>ATP</name>
        <dbReference type="ChEBI" id="CHEBI:30616"/>
    </ligand>
</feature>
<feature type="binding site" evidence="1">
    <location>
        <position position="50"/>
    </location>
    <ligand>
        <name>substrate</name>
    </ligand>
</feature>
<feature type="binding site" evidence="1">
    <location>
        <position position="137"/>
    </location>
    <ligand>
        <name>substrate</name>
    </ligand>
</feature>
<feature type="binding site" evidence="1">
    <location>
        <position position="149"/>
    </location>
    <ligand>
        <name>substrate</name>
    </ligand>
</feature>
<feature type="binding site" evidence="1">
    <location>
        <begin position="169"/>
        <end position="170"/>
    </location>
    <ligand>
        <name>ATP</name>
        <dbReference type="ChEBI" id="CHEBI:30616"/>
    </ligand>
</feature>
<feature type="binding site" evidence="1">
    <location>
        <begin position="211"/>
        <end position="217"/>
    </location>
    <ligand>
        <name>ATP</name>
        <dbReference type="ChEBI" id="CHEBI:30616"/>
    </ligand>
</feature>
<reference key="1">
    <citation type="journal article" date="2008" name="Genome Res.">
        <title>Comparative genome analysis of Salmonella enteritidis PT4 and Salmonella gallinarum 287/91 provides insights into evolutionary and host adaptation pathways.</title>
        <authorList>
            <person name="Thomson N.R."/>
            <person name="Clayton D.J."/>
            <person name="Windhorst D."/>
            <person name="Vernikos G."/>
            <person name="Davidson S."/>
            <person name="Churcher C."/>
            <person name="Quail M.A."/>
            <person name="Stevens M."/>
            <person name="Jones M.A."/>
            <person name="Watson M."/>
            <person name="Barron A."/>
            <person name="Layton A."/>
            <person name="Pickard D."/>
            <person name="Kingsley R.A."/>
            <person name="Bignell A."/>
            <person name="Clark L."/>
            <person name="Harris B."/>
            <person name="Ormond D."/>
            <person name="Abdellah Z."/>
            <person name="Brooks K."/>
            <person name="Cherevach I."/>
            <person name="Chillingworth T."/>
            <person name="Woodward J."/>
            <person name="Norberczak H."/>
            <person name="Lord A."/>
            <person name="Arrowsmith C."/>
            <person name="Jagels K."/>
            <person name="Moule S."/>
            <person name="Mungall K."/>
            <person name="Saunders M."/>
            <person name="Whitehead S."/>
            <person name="Chabalgoity J.A."/>
            <person name="Maskell D."/>
            <person name="Humphreys T."/>
            <person name="Roberts M."/>
            <person name="Barrow P.A."/>
            <person name="Dougan G."/>
            <person name="Parkhill J."/>
        </authorList>
    </citation>
    <scope>NUCLEOTIDE SEQUENCE [LARGE SCALE GENOMIC DNA]</scope>
    <source>
        <strain>P125109</strain>
    </source>
</reference>
<evidence type="ECO:0000255" key="1">
    <source>
        <dbReference type="HAMAP-Rule" id="MF_00456"/>
    </source>
</evidence>
<accession>B5R4S5</accession>
<sequence length="367" mass="39141">MSDSQTLVVKLGTSVLTGGSRRLNRAHIVELVRQCAQLHAAGHRIVIVTSGAIAAGREHLGYPELPATIASKQLLAAVGQSRLIQLWEQLFSIYGIHIGQMLLTRADMEDRERFLNARDTLRALLDNHIVPVINENDAVATAEIKVGDNDNLSALAAILAGADKLLLLTDQQGLFTADPRSNPQAELIKDVYGVDDALRSIAGDSVSGLGTGGMSTKLQAADVACRAGIDTIIASGSKPGVIGDVMEGISVGTRFHAQASPLENRKRWIFGAPPAGEITVDEGATAAMLERGSSLLPKGIKSVTGNFSRGEVIRICNLQGRDIAHGVSRYNSDALRRIAGHHSQQIDAILGYEYGPVAVHRDDMITR</sequence>